<feature type="chain" id="PRO_1000072290" description="Pyrrolidone-carboxylate peptidase">
    <location>
        <begin position="1"/>
        <end position="200"/>
    </location>
</feature>
<feature type="active site" evidence="1">
    <location>
        <position position="78"/>
    </location>
</feature>
<feature type="active site" evidence="1">
    <location>
        <position position="141"/>
    </location>
</feature>
<feature type="active site" evidence="1">
    <location>
        <position position="165"/>
    </location>
</feature>
<keyword id="KW-0963">Cytoplasm</keyword>
<keyword id="KW-0378">Hydrolase</keyword>
<keyword id="KW-0645">Protease</keyword>
<keyword id="KW-0788">Thiol protease</keyword>
<protein>
    <recommendedName>
        <fullName evidence="1">Pyrrolidone-carboxylate peptidase</fullName>
        <ecNumber evidence="1">3.4.19.3</ecNumber>
    </recommendedName>
    <alternativeName>
        <fullName evidence="1">5-oxoprolyl-peptidase</fullName>
    </alternativeName>
    <alternativeName>
        <fullName evidence="1">Pyroglutamyl-peptidase I</fullName>
        <shortName evidence="1">PGP-I</shortName>
        <shortName evidence="1">Pyrase</shortName>
    </alternativeName>
</protein>
<name>PCP_LACH4</name>
<accession>A8YX24</accession>
<sequence>MKILVTGFDPFGGEKINPAIEAVKRLPDEIAGNQIIKLEVPTIFYQSAEVVKKAIEKENPEMVINVGQAGGRSAITPERIAINFQAGSTPDNSGKGPKEGKIQADGLDGYFTQLPIKKMVAAIRHAGLPAQVSNSAGTYVCNHLFYEIQYLIHHDYPNLKAGFIHIPYLPSQARNGRYPSMSLDNMVTGLTVAIETAAMC</sequence>
<organism>
    <name type="scientific">Lactobacillus helveticus (strain DPC 4571)</name>
    <dbReference type="NCBI Taxonomy" id="405566"/>
    <lineage>
        <taxon>Bacteria</taxon>
        <taxon>Bacillati</taxon>
        <taxon>Bacillota</taxon>
        <taxon>Bacilli</taxon>
        <taxon>Lactobacillales</taxon>
        <taxon>Lactobacillaceae</taxon>
        <taxon>Lactobacillus</taxon>
    </lineage>
</organism>
<gene>
    <name evidence="1" type="primary">pcp</name>
    <name type="ordered locus">lhv_0202</name>
</gene>
<evidence type="ECO:0000255" key="1">
    <source>
        <dbReference type="HAMAP-Rule" id="MF_00417"/>
    </source>
</evidence>
<dbReference type="EC" id="3.4.19.3" evidence="1"/>
<dbReference type="EMBL" id="CP000517">
    <property type="protein sequence ID" value="ABX26447.1"/>
    <property type="molecule type" value="Genomic_DNA"/>
</dbReference>
<dbReference type="RefSeq" id="WP_012211309.1">
    <property type="nucleotide sequence ID" value="NC_010080.1"/>
</dbReference>
<dbReference type="SMR" id="A8YX24"/>
<dbReference type="MEROPS" id="C15.001"/>
<dbReference type="KEGG" id="lhe:lhv_0202"/>
<dbReference type="eggNOG" id="COG2039">
    <property type="taxonomic scope" value="Bacteria"/>
</dbReference>
<dbReference type="HOGENOM" id="CLU_043960_4_0_9"/>
<dbReference type="Proteomes" id="UP000000790">
    <property type="component" value="Chromosome"/>
</dbReference>
<dbReference type="GO" id="GO:0005829">
    <property type="term" value="C:cytosol"/>
    <property type="evidence" value="ECO:0007669"/>
    <property type="project" value="InterPro"/>
</dbReference>
<dbReference type="GO" id="GO:0016920">
    <property type="term" value="F:pyroglutamyl-peptidase activity"/>
    <property type="evidence" value="ECO:0007669"/>
    <property type="project" value="UniProtKB-UniRule"/>
</dbReference>
<dbReference type="GO" id="GO:0006508">
    <property type="term" value="P:proteolysis"/>
    <property type="evidence" value="ECO:0007669"/>
    <property type="project" value="UniProtKB-KW"/>
</dbReference>
<dbReference type="CDD" id="cd00501">
    <property type="entry name" value="Peptidase_C15"/>
    <property type="match status" value="1"/>
</dbReference>
<dbReference type="FunFam" id="3.40.630.20:FF:000001">
    <property type="entry name" value="Pyrrolidone-carboxylate peptidase"/>
    <property type="match status" value="1"/>
</dbReference>
<dbReference type="Gene3D" id="3.40.630.20">
    <property type="entry name" value="Peptidase C15, pyroglutamyl peptidase I-like"/>
    <property type="match status" value="1"/>
</dbReference>
<dbReference type="HAMAP" id="MF_00417">
    <property type="entry name" value="Pyrrolid_peptidase"/>
    <property type="match status" value="1"/>
</dbReference>
<dbReference type="InterPro" id="IPR000816">
    <property type="entry name" value="Peptidase_C15"/>
</dbReference>
<dbReference type="InterPro" id="IPR016125">
    <property type="entry name" value="Peptidase_C15-like"/>
</dbReference>
<dbReference type="InterPro" id="IPR036440">
    <property type="entry name" value="Peptidase_C15-like_sf"/>
</dbReference>
<dbReference type="InterPro" id="IPR029762">
    <property type="entry name" value="PGP-I_bact-type"/>
</dbReference>
<dbReference type="InterPro" id="IPR033694">
    <property type="entry name" value="PGPEP1_Cys_AS"/>
</dbReference>
<dbReference type="InterPro" id="IPR033693">
    <property type="entry name" value="PGPEP1_Glu_AS"/>
</dbReference>
<dbReference type="NCBIfam" id="NF009676">
    <property type="entry name" value="PRK13197.1"/>
    <property type="match status" value="1"/>
</dbReference>
<dbReference type="NCBIfam" id="TIGR00504">
    <property type="entry name" value="pyro_pdase"/>
    <property type="match status" value="1"/>
</dbReference>
<dbReference type="PANTHER" id="PTHR23402">
    <property type="entry name" value="PROTEASE FAMILY C15 PYROGLUTAMYL-PEPTIDASE I-RELATED"/>
    <property type="match status" value="1"/>
</dbReference>
<dbReference type="PANTHER" id="PTHR23402:SF1">
    <property type="entry name" value="PYROGLUTAMYL-PEPTIDASE I"/>
    <property type="match status" value="1"/>
</dbReference>
<dbReference type="Pfam" id="PF01470">
    <property type="entry name" value="Peptidase_C15"/>
    <property type="match status" value="1"/>
</dbReference>
<dbReference type="PIRSF" id="PIRSF015592">
    <property type="entry name" value="Prld-crbxl_pptds"/>
    <property type="match status" value="1"/>
</dbReference>
<dbReference type="PRINTS" id="PR00706">
    <property type="entry name" value="PYROGLUPTASE"/>
</dbReference>
<dbReference type="SUPFAM" id="SSF53182">
    <property type="entry name" value="Pyrrolidone carboxyl peptidase (pyroglutamate aminopeptidase)"/>
    <property type="match status" value="1"/>
</dbReference>
<dbReference type="PROSITE" id="PS01334">
    <property type="entry name" value="PYRASE_CYS"/>
    <property type="match status" value="1"/>
</dbReference>
<dbReference type="PROSITE" id="PS01333">
    <property type="entry name" value="PYRASE_GLU"/>
    <property type="match status" value="1"/>
</dbReference>
<proteinExistence type="inferred from homology"/>
<comment type="function">
    <text evidence="1">Removes 5-oxoproline from various penultimate amino acid residues except L-proline.</text>
</comment>
<comment type="catalytic activity">
    <reaction evidence="1">
        <text>Release of an N-terminal pyroglutamyl group from a polypeptide, the second amino acid generally not being Pro.</text>
        <dbReference type="EC" id="3.4.19.3"/>
    </reaction>
</comment>
<comment type="subunit">
    <text evidence="1">Homotetramer.</text>
</comment>
<comment type="subcellular location">
    <subcellularLocation>
        <location evidence="1">Cytoplasm</location>
    </subcellularLocation>
</comment>
<comment type="similarity">
    <text evidence="1">Belongs to the peptidase C15 family.</text>
</comment>
<reference key="1">
    <citation type="journal article" date="2008" name="J. Bacteriol.">
        <title>Genome sequence of Lactobacillus helveticus: an organism distinguished by selective gene loss and IS element expansion.</title>
        <authorList>
            <person name="Callanan M."/>
            <person name="Kaleta P."/>
            <person name="O'Callaghan J."/>
            <person name="O'Sullivan O."/>
            <person name="Jordan K."/>
            <person name="McAuliffe O."/>
            <person name="Sangrador-Vegas A."/>
            <person name="Slattery L."/>
            <person name="Fitzgerald G.F."/>
            <person name="Beresford T."/>
            <person name="Ross R.P."/>
        </authorList>
    </citation>
    <scope>NUCLEOTIDE SEQUENCE [LARGE SCALE GENOMIC DNA]</scope>
    <source>
        <strain>DPC 4571</strain>
    </source>
</reference>